<reference key="1">
    <citation type="journal article" date="2008" name="PLoS ONE">
        <title>Genome sequence of Brucella abortus vaccine strain S19 compared to virulent strains yields candidate virulence genes.</title>
        <authorList>
            <person name="Crasta O.R."/>
            <person name="Folkerts O."/>
            <person name="Fei Z."/>
            <person name="Mane S.P."/>
            <person name="Evans C."/>
            <person name="Martino-Catt S."/>
            <person name="Bricker B."/>
            <person name="Yu G."/>
            <person name="Du L."/>
            <person name="Sobral B.W."/>
        </authorList>
    </citation>
    <scope>NUCLEOTIDE SEQUENCE [LARGE SCALE GENOMIC DNA]</scope>
    <source>
        <strain>S19</strain>
    </source>
</reference>
<evidence type="ECO:0000255" key="1">
    <source>
        <dbReference type="HAMAP-Rule" id="MF_01152"/>
    </source>
</evidence>
<dbReference type="EMBL" id="CP000887">
    <property type="protein sequence ID" value="ACD73474.1"/>
    <property type="molecule type" value="Genomic_DNA"/>
</dbReference>
<dbReference type="RefSeq" id="WP_002965191.1">
    <property type="nucleotide sequence ID" value="NC_010742.1"/>
</dbReference>
<dbReference type="SMR" id="B2S9C2"/>
<dbReference type="GeneID" id="93017567"/>
<dbReference type="KEGG" id="bmc:BAbS19_I19920"/>
<dbReference type="HOGENOM" id="CLU_017633_0_7_5"/>
<dbReference type="Proteomes" id="UP000002565">
    <property type="component" value="Chromosome 1"/>
</dbReference>
<dbReference type="GO" id="GO:0005737">
    <property type="term" value="C:cytoplasm"/>
    <property type="evidence" value="ECO:0007669"/>
    <property type="project" value="UniProtKB-SubCell"/>
</dbReference>
<dbReference type="GO" id="GO:0005524">
    <property type="term" value="F:ATP binding"/>
    <property type="evidence" value="ECO:0007669"/>
    <property type="project" value="InterPro"/>
</dbReference>
<dbReference type="GO" id="GO:0031072">
    <property type="term" value="F:heat shock protein binding"/>
    <property type="evidence" value="ECO:0007669"/>
    <property type="project" value="InterPro"/>
</dbReference>
<dbReference type="GO" id="GO:0051082">
    <property type="term" value="F:unfolded protein binding"/>
    <property type="evidence" value="ECO:0007669"/>
    <property type="project" value="UniProtKB-UniRule"/>
</dbReference>
<dbReference type="GO" id="GO:0008270">
    <property type="term" value="F:zinc ion binding"/>
    <property type="evidence" value="ECO:0007669"/>
    <property type="project" value="UniProtKB-UniRule"/>
</dbReference>
<dbReference type="GO" id="GO:0051085">
    <property type="term" value="P:chaperone cofactor-dependent protein refolding"/>
    <property type="evidence" value="ECO:0007669"/>
    <property type="project" value="TreeGrafter"/>
</dbReference>
<dbReference type="GO" id="GO:0006260">
    <property type="term" value="P:DNA replication"/>
    <property type="evidence" value="ECO:0007669"/>
    <property type="project" value="UniProtKB-KW"/>
</dbReference>
<dbReference type="GO" id="GO:0042026">
    <property type="term" value="P:protein refolding"/>
    <property type="evidence" value="ECO:0007669"/>
    <property type="project" value="TreeGrafter"/>
</dbReference>
<dbReference type="GO" id="GO:0009408">
    <property type="term" value="P:response to heat"/>
    <property type="evidence" value="ECO:0007669"/>
    <property type="project" value="InterPro"/>
</dbReference>
<dbReference type="CDD" id="cd06257">
    <property type="entry name" value="DnaJ"/>
    <property type="match status" value="1"/>
</dbReference>
<dbReference type="CDD" id="cd10747">
    <property type="entry name" value="DnaJ_C"/>
    <property type="match status" value="1"/>
</dbReference>
<dbReference type="CDD" id="cd10719">
    <property type="entry name" value="DnaJ_zf"/>
    <property type="match status" value="1"/>
</dbReference>
<dbReference type="FunFam" id="1.10.287.110:FF:000034">
    <property type="entry name" value="Chaperone protein DnaJ"/>
    <property type="match status" value="1"/>
</dbReference>
<dbReference type="FunFam" id="2.10.230.10:FF:000002">
    <property type="entry name" value="Molecular chaperone DnaJ"/>
    <property type="match status" value="1"/>
</dbReference>
<dbReference type="FunFam" id="2.60.260.20:FF:000004">
    <property type="entry name" value="Molecular chaperone DnaJ"/>
    <property type="match status" value="1"/>
</dbReference>
<dbReference type="Gene3D" id="1.10.287.110">
    <property type="entry name" value="DnaJ domain"/>
    <property type="match status" value="1"/>
</dbReference>
<dbReference type="Gene3D" id="2.10.230.10">
    <property type="entry name" value="Heat shock protein DnaJ, cysteine-rich domain"/>
    <property type="match status" value="1"/>
</dbReference>
<dbReference type="Gene3D" id="2.60.260.20">
    <property type="entry name" value="Urease metallochaperone UreE, N-terminal domain"/>
    <property type="match status" value="2"/>
</dbReference>
<dbReference type="HAMAP" id="MF_01152">
    <property type="entry name" value="DnaJ"/>
    <property type="match status" value="1"/>
</dbReference>
<dbReference type="InterPro" id="IPR012724">
    <property type="entry name" value="DnaJ"/>
</dbReference>
<dbReference type="InterPro" id="IPR002939">
    <property type="entry name" value="DnaJ_C"/>
</dbReference>
<dbReference type="InterPro" id="IPR001623">
    <property type="entry name" value="DnaJ_domain"/>
</dbReference>
<dbReference type="InterPro" id="IPR018253">
    <property type="entry name" value="DnaJ_domain_CS"/>
</dbReference>
<dbReference type="InterPro" id="IPR008971">
    <property type="entry name" value="HSP40/DnaJ_pept-bd"/>
</dbReference>
<dbReference type="InterPro" id="IPR001305">
    <property type="entry name" value="HSP_DnaJ_Cys-rich_dom"/>
</dbReference>
<dbReference type="InterPro" id="IPR036410">
    <property type="entry name" value="HSP_DnaJ_Cys-rich_dom_sf"/>
</dbReference>
<dbReference type="InterPro" id="IPR036869">
    <property type="entry name" value="J_dom_sf"/>
</dbReference>
<dbReference type="NCBIfam" id="TIGR02349">
    <property type="entry name" value="DnaJ_bact"/>
    <property type="match status" value="1"/>
</dbReference>
<dbReference type="NCBIfam" id="NF008035">
    <property type="entry name" value="PRK10767.1"/>
    <property type="match status" value="1"/>
</dbReference>
<dbReference type="PANTHER" id="PTHR43096:SF48">
    <property type="entry name" value="CHAPERONE PROTEIN DNAJ"/>
    <property type="match status" value="1"/>
</dbReference>
<dbReference type="PANTHER" id="PTHR43096">
    <property type="entry name" value="DNAJ HOMOLOG 1, MITOCHONDRIAL-RELATED"/>
    <property type="match status" value="1"/>
</dbReference>
<dbReference type="Pfam" id="PF00226">
    <property type="entry name" value="DnaJ"/>
    <property type="match status" value="1"/>
</dbReference>
<dbReference type="Pfam" id="PF01556">
    <property type="entry name" value="DnaJ_C"/>
    <property type="match status" value="1"/>
</dbReference>
<dbReference type="Pfam" id="PF00684">
    <property type="entry name" value="DnaJ_CXXCXGXG"/>
    <property type="match status" value="1"/>
</dbReference>
<dbReference type="PRINTS" id="PR00625">
    <property type="entry name" value="JDOMAIN"/>
</dbReference>
<dbReference type="SMART" id="SM00271">
    <property type="entry name" value="DnaJ"/>
    <property type="match status" value="1"/>
</dbReference>
<dbReference type="SUPFAM" id="SSF46565">
    <property type="entry name" value="Chaperone J-domain"/>
    <property type="match status" value="1"/>
</dbReference>
<dbReference type="SUPFAM" id="SSF57938">
    <property type="entry name" value="DnaJ/Hsp40 cysteine-rich domain"/>
    <property type="match status" value="1"/>
</dbReference>
<dbReference type="SUPFAM" id="SSF49493">
    <property type="entry name" value="HSP40/DnaJ peptide-binding domain"/>
    <property type="match status" value="2"/>
</dbReference>
<dbReference type="PROSITE" id="PS00636">
    <property type="entry name" value="DNAJ_1"/>
    <property type="match status" value="1"/>
</dbReference>
<dbReference type="PROSITE" id="PS50076">
    <property type="entry name" value="DNAJ_2"/>
    <property type="match status" value="1"/>
</dbReference>
<dbReference type="PROSITE" id="PS51188">
    <property type="entry name" value="ZF_CR"/>
    <property type="match status" value="1"/>
</dbReference>
<proteinExistence type="inferred from homology"/>
<comment type="function">
    <text evidence="1">Participates actively in the response to hyperosmotic and heat shock by preventing the aggregation of stress-denatured proteins and by disaggregating proteins, also in an autonomous, DnaK-independent fashion. Unfolded proteins bind initially to DnaJ; upon interaction with the DnaJ-bound protein, DnaK hydrolyzes its bound ATP, resulting in the formation of a stable complex. GrpE releases ADP from DnaK; ATP binding to DnaK triggers the release of the substrate protein, thus completing the reaction cycle. Several rounds of ATP-dependent interactions between DnaJ, DnaK and GrpE are required for fully efficient folding. Also involved, together with DnaK and GrpE, in the DNA replication of plasmids through activation of initiation proteins.</text>
</comment>
<comment type="cofactor">
    <cofactor evidence="1">
        <name>Zn(2+)</name>
        <dbReference type="ChEBI" id="CHEBI:29105"/>
    </cofactor>
    <text evidence="1">Binds 2 Zn(2+) ions per monomer.</text>
</comment>
<comment type="subunit">
    <text evidence="1">Homodimer.</text>
</comment>
<comment type="subcellular location">
    <subcellularLocation>
        <location evidence="1">Cytoplasm</location>
    </subcellularLocation>
</comment>
<comment type="domain">
    <text evidence="1">The J domain is necessary and sufficient to stimulate DnaK ATPase activity. Zinc center 1 plays an important role in the autonomous, DnaK-independent chaperone activity of DnaJ. Zinc center 2 is essential for interaction with DnaK and for DnaJ activity.</text>
</comment>
<comment type="similarity">
    <text evidence="1">Belongs to the DnaJ family.</text>
</comment>
<name>DNAJ_BRUA1</name>
<protein>
    <recommendedName>
        <fullName evidence="1">Chaperone protein DnaJ</fullName>
    </recommendedName>
</protein>
<gene>
    <name evidence="1" type="primary">dnaJ</name>
    <name type="ordered locus">BAbS19_I19920</name>
</gene>
<organism>
    <name type="scientific">Brucella abortus (strain S19)</name>
    <dbReference type="NCBI Taxonomy" id="430066"/>
    <lineage>
        <taxon>Bacteria</taxon>
        <taxon>Pseudomonadati</taxon>
        <taxon>Pseudomonadota</taxon>
        <taxon>Alphaproteobacteria</taxon>
        <taxon>Hyphomicrobiales</taxon>
        <taxon>Brucellaceae</taxon>
        <taxon>Brucella/Ochrobactrum group</taxon>
        <taxon>Brucella</taxon>
    </lineage>
</organism>
<accession>B2S9C2</accession>
<keyword id="KW-0143">Chaperone</keyword>
<keyword id="KW-0963">Cytoplasm</keyword>
<keyword id="KW-0235">DNA replication</keyword>
<keyword id="KW-0479">Metal-binding</keyword>
<keyword id="KW-0677">Repeat</keyword>
<keyword id="KW-0346">Stress response</keyword>
<keyword id="KW-0862">Zinc</keyword>
<keyword id="KW-0863">Zinc-finger</keyword>
<feature type="chain" id="PRO_1000137663" description="Chaperone protein DnaJ">
    <location>
        <begin position="1"/>
        <end position="377"/>
    </location>
</feature>
<feature type="domain" description="J" evidence="1">
    <location>
        <begin position="4"/>
        <end position="69"/>
    </location>
</feature>
<feature type="repeat" description="CXXCXGXG motif">
    <location>
        <begin position="148"/>
        <end position="155"/>
    </location>
</feature>
<feature type="repeat" description="CXXCXGXG motif">
    <location>
        <begin position="165"/>
        <end position="172"/>
    </location>
</feature>
<feature type="repeat" description="CXXCXGXG motif">
    <location>
        <begin position="187"/>
        <end position="194"/>
    </location>
</feature>
<feature type="repeat" description="CXXCXGXG motif">
    <location>
        <begin position="201"/>
        <end position="208"/>
    </location>
</feature>
<feature type="zinc finger region" description="CR-type" evidence="1">
    <location>
        <begin position="135"/>
        <end position="213"/>
    </location>
</feature>
<feature type="binding site" evidence="1">
    <location>
        <position position="148"/>
    </location>
    <ligand>
        <name>Zn(2+)</name>
        <dbReference type="ChEBI" id="CHEBI:29105"/>
        <label>1</label>
    </ligand>
</feature>
<feature type="binding site" evidence="1">
    <location>
        <position position="151"/>
    </location>
    <ligand>
        <name>Zn(2+)</name>
        <dbReference type="ChEBI" id="CHEBI:29105"/>
        <label>1</label>
    </ligand>
</feature>
<feature type="binding site" evidence="1">
    <location>
        <position position="165"/>
    </location>
    <ligand>
        <name>Zn(2+)</name>
        <dbReference type="ChEBI" id="CHEBI:29105"/>
        <label>2</label>
    </ligand>
</feature>
<feature type="binding site" evidence="1">
    <location>
        <position position="168"/>
    </location>
    <ligand>
        <name>Zn(2+)</name>
        <dbReference type="ChEBI" id="CHEBI:29105"/>
        <label>2</label>
    </ligand>
</feature>
<feature type="binding site" evidence="1">
    <location>
        <position position="187"/>
    </location>
    <ligand>
        <name>Zn(2+)</name>
        <dbReference type="ChEBI" id="CHEBI:29105"/>
        <label>2</label>
    </ligand>
</feature>
<feature type="binding site" evidence="1">
    <location>
        <position position="190"/>
    </location>
    <ligand>
        <name>Zn(2+)</name>
        <dbReference type="ChEBI" id="CHEBI:29105"/>
        <label>2</label>
    </ligand>
</feature>
<feature type="binding site" evidence="1">
    <location>
        <position position="201"/>
    </location>
    <ligand>
        <name>Zn(2+)</name>
        <dbReference type="ChEBI" id="CHEBI:29105"/>
        <label>1</label>
    </ligand>
</feature>
<feature type="binding site" evidence="1">
    <location>
        <position position="204"/>
    </location>
    <ligand>
        <name>Zn(2+)</name>
        <dbReference type="ChEBI" id="CHEBI:29105"/>
        <label>1</label>
    </ligand>
</feature>
<sequence>MKIDYYEALGVTRTADDKTLKAAFRKLAMQYHPDRNPDDPEAERKFKEIGEAYETLKDPQKRAAYDRFGHAAFENGGMGGGFGNGFGGAGGFADIFEDIFGEMMGGGRRRSNGGRERGADLRYNMEVTLEEAYAGKTAQIRVPTSITCDECSGSGAKPGSQPTTCTMCSGSGRVRAAQGFFSVERTCPGCNGRGQIIKDPCEKCHGQGRVTQERSLSVNIPTGIEDGTRIRLAGEGEAGLRGGPAGDLYIFLSVKPHEFFQRDGADLYCKVPISMTTAALGGQFEVSTLDGTQTRVKVPEGTQNGKQFRLKGKGMPVLRQSVTGDLYIQIDIETPQNLSKRQRELLEEFEKLSSQENSPKSAGFFSRMKEFFEGIGE</sequence>